<protein>
    <recommendedName>
        <fullName evidence="1">Large ribosomal subunit protein bL9</fullName>
    </recommendedName>
    <alternativeName>
        <fullName evidence="2">50S ribosomal protein L9</fullName>
    </alternativeName>
</protein>
<reference key="1">
    <citation type="journal article" date="2007" name="J. Bacteriol.">
        <title>Whole-genome analysis of the methyl tert-butyl ether-degrading beta-proteobacterium Methylibium petroleiphilum PM1.</title>
        <authorList>
            <person name="Kane S.R."/>
            <person name="Chakicherla A.Y."/>
            <person name="Chain P.S.G."/>
            <person name="Schmidt R."/>
            <person name="Shin M.W."/>
            <person name="Legler T.C."/>
            <person name="Scow K.M."/>
            <person name="Larimer F.W."/>
            <person name="Lucas S.M."/>
            <person name="Richardson P.M."/>
            <person name="Hristova K.R."/>
        </authorList>
    </citation>
    <scope>NUCLEOTIDE SEQUENCE [LARGE SCALE GENOMIC DNA]</scope>
    <source>
        <strain>ATCC BAA-1232 / LMG 22953 / PM1</strain>
    </source>
</reference>
<accession>A2SG02</accession>
<name>RL9_METPP</name>
<feature type="chain" id="PRO_1000014808" description="Large ribosomal subunit protein bL9">
    <location>
        <begin position="1"/>
        <end position="150"/>
    </location>
</feature>
<organism>
    <name type="scientific">Methylibium petroleiphilum (strain ATCC BAA-1232 / LMG 22953 / PM1)</name>
    <dbReference type="NCBI Taxonomy" id="420662"/>
    <lineage>
        <taxon>Bacteria</taxon>
        <taxon>Pseudomonadati</taxon>
        <taxon>Pseudomonadota</taxon>
        <taxon>Betaproteobacteria</taxon>
        <taxon>Burkholderiales</taxon>
        <taxon>Sphaerotilaceae</taxon>
        <taxon>Methylibium</taxon>
    </lineage>
</organism>
<gene>
    <name evidence="1" type="primary">rplI</name>
    <name type="ordered locus">Mpe_A1529</name>
</gene>
<keyword id="KW-1185">Reference proteome</keyword>
<keyword id="KW-0687">Ribonucleoprotein</keyword>
<keyword id="KW-0689">Ribosomal protein</keyword>
<keyword id="KW-0694">RNA-binding</keyword>
<keyword id="KW-0699">rRNA-binding</keyword>
<proteinExistence type="inferred from homology"/>
<sequence length="150" mass="15825">MQIILLEKVANLGNLGEVVKVKDGYARNFLIPSGAARRATETAVKEFEAKRIELEKAAAAKLAASQAEGEKLNGKTISITQKAGVDGRLFGSVTNHDIAEALGKAGFKVVKSQVRLPNGPLKTVGEHPVTVALHTDVVVDVNVTVVGETD</sequence>
<dbReference type="EMBL" id="CP000555">
    <property type="protein sequence ID" value="ABM94491.1"/>
    <property type="molecule type" value="Genomic_DNA"/>
</dbReference>
<dbReference type="RefSeq" id="WP_011829128.1">
    <property type="nucleotide sequence ID" value="NC_008825.1"/>
</dbReference>
<dbReference type="SMR" id="A2SG02"/>
<dbReference type="STRING" id="420662.Mpe_A1529"/>
<dbReference type="KEGG" id="mpt:Mpe_A1529"/>
<dbReference type="eggNOG" id="COG0359">
    <property type="taxonomic scope" value="Bacteria"/>
</dbReference>
<dbReference type="HOGENOM" id="CLU_078938_4_1_4"/>
<dbReference type="Proteomes" id="UP000000366">
    <property type="component" value="Chromosome"/>
</dbReference>
<dbReference type="GO" id="GO:1990904">
    <property type="term" value="C:ribonucleoprotein complex"/>
    <property type="evidence" value="ECO:0007669"/>
    <property type="project" value="UniProtKB-KW"/>
</dbReference>
<dbReference type="GO" id="GO:0005840">
    <property type="term" value="C:ribosome"/>
    <property type="evidence" value="ECO:0007669"/>
    <property type="project" value="UniProtKB-KW"/>
</dbReference>
<dbReference type="GO" id="GO:0019843">
    <property type="term" value="F:rRNA binding"/>
    <property type="evidence" value="ECO:0007669"/>
    <property type="project" value="UniProtKB-UniRule"/>
</dbReference>
<dbReference type="GO" id="GO:0003735">
    <property type="term" value="F:structural constituent of ribosome"/>
    <property type="evidence" value="ECO:0007669"/>
    <property type="project" value="InterPro"/>
</dbReference>
<dbReference type="GO" id="GO:0006412">
    <property type="term" value="P:translation"/>
    <property type="evidence" value="ECO:0007669"/>
    <property type="project" value="UniProtKB-UniRule"/>
</dbReference>
<dbReference type="Gene3D" id="3.10.430.100">
    <property type="entry name" value="Ribosomal protein L9, C-terminal domain"/>
    <property type="match status" value="1"/>
</dbReference>
<dbReference type="Gene3D" id="3.40.5.10">
    <property type="entry name" value="Ribosomal protein L9, N-terminal domain"/>
    <property type="match status" value="1"/>
</dbReference>
<dbReference type="HAMAP" id="MF_00503">
    <property type="entry name" value="Ribosomal_bL9"/>
    <property type="match status" value="1"/>
</dbReference>
<dbReference type="InterPro" id="IPR000244">
    <property type="entry name" value="Ribosomal_bL9"/>
</dbReference>
<dbReference type="InterPro" id="IPR009027">
    <property type="entry name" value="Ribosomal_bL9/RNase_H1_N"/>
</dbReference>
<dbReference type="InterPro" id="IPR020594">
    <property type="entry name" value="Ribosomal_bL9_bac/chp"/>
</dbReference>
<dbReference type="InterPro" id="IPR020069">
    <property type="entry name" value="Ribosomal_bL9_C"/>
</dbReference>
<dbReference type="InterPro" id="IPR036791">
    <property type="entry name" value="Ribosomal_bL9_C_sf"/>
</dbReference>
<dbReference type="InterPro" id="IPR020070">
    <property type="entry name" value="Ribosomal_bL9_N"/>
</dbReference>
<dbReference type="InterPro" id="IPR036935">
    <property type="entry name" value="Ribosomal_bL9_N_sf"/>
</dbReference>
<dbReference type="NCBIfam" id="TIGR00158">
    <property type="entry name" value="L9"/>
    <property type="match status" value="1"/>
</dbReference>
<dbReference type="PANTHER" id="PTHR21368">
    <property type="entry name" value="50S RIBOSOMAL PROTEIN L9"/>
    <property type="match status" value="1"/>
</dbReference>
<dbReference type="Pfam" id="PF03948">
    <property type="entry name" value="Ribosomal_L9_C"/>
    <property type="match status" value="1"/>
</dbReference>
<dbReference type="Pfam" id="PF01281">
    <property type="entry name" value="Ribosomal_L9_N"/>
    <property type="match status" value="1"/>
</dbReference>
<dbReference type="SUPFAM" id="SSF55658">
    <property type="entry name" value="L9 N-domain-like"/>
    <property type="match status" value="1"/>
</dbReference>
<dbReference type="SUPFAM" id="SSF55653">
    <property type="entry name" value="Ribosomal protein L9 C-domain"/>
    <property type="match status" value="1"/>
</dbReference>
<dbReference type="PROSITE" id="PS00651">
    <property type="entry name" value="RIBOSOMAL_L9"/>
    <property type="match status" value="1"/>
</dbReference>
<evidence type="ECO:0000255" key="1">
    <source>
        <dbReference type="HAMAP-Rule" id="MF_00503"/>
    </source>
</evidence>
<evidence type="ECO:0000305" key="2"/>
<comment type="function">
    <text evidence="1">Binds to the 23S rRNA.</text>
</comment>
<comment type="similarity">
    <text evidence="1">Belongs to the bacterial ribosomal protein bL9 family.</text>
</comment>